<name>BBS10_HUMAN</name>
<gene>
    <name type="primary">BBS10</name>
    <name type="synonym">C12orf58</name>
</gene>
<sequence length="723" mass="80838">MLSSMAAAGSVKAALQVAEVLEAIVSCCVGPEGRQVLCTKPTGEVLLSRNGGRLLEALHLEHPIARMIVDCVSSHLKKTGDGAKTFIIFLCHLLRGLHAITDREKDPLMCENIQTHGRHWKNCSRWKFISQALLTFQTQILDGIMDQYLSRHFLSIFSSAKERTLCRSSLELLLEAYFCGRVGRNNHKFISQLMCDYFFKCMTCKSGIGVFELVDDHFVELNVGVTGLPVSDSRIIAGLVLQKDFSVYRPADGDMRMVIVTETIQPLFSTSGSEFILNSEAQFQTSQFWIMEKTKAIMKHLHSQNVKLLISSVKQPDLVSYYAGVNGISVVECLSSEEVSLIRRIIGLSPFVPPQAFSQCEIPNTALVKFCKPLILRSKRYVHLGLISTCAFIPHSIVLCGPVHGLIEQHEDALHGALKMLRQLFKDLDLNYMTQTNDQNGTSSLFIYKNSGESYQAPDPGNGSIQRPYQDTVAENKDALEKTQTYLKVHSNLVIPDVELETYIPYSTPTLTPTDTFQTVETLTCLSLERNRLTDYYEPLLKNNSTAYSTRGNRIEISYENLQVTNITRKGSMLPVSCKLPNMGTSQSYLSSSMPAGCVLPVGGNFEILLHYYLLNYAKKCHQSEETMVSMIIANALLGIPKVLYKSKTGKYSFPHTYIRAVHALQTNQPLVSSQTGLESVMGKYQLLTSVLQCLTKILTIDMVITVKRHPQKVHNQDSEDEL</sequence>
<comment type="function">
    <text evidence="3 4">Probable molecular chaperone that assists the folding of proteins upon ATP hydrolysis (PubMed:20080638). Plays a role in the assembly of BBSome, a complex involved in ciliogenesis regulating transports vesicles to the cilia (PubMed:20080638). Involved in adipogenic differentiation (PubMed:19190184).</text>
</comment>
<comment type="subunit">
    <text evidence="4">Component of a complex composed at least of MKKS, BBS10, BBS12, TCP1, CCT2, CCT3, CCT4, CCT5 and CCT8.</text>
</comment>
<comment type="interaction">
    <interactant intactId="EBI-6128013">
        <id>Q8TAM1</id>
    </interactant>
    <interactant intactId="EBI-6128352">
        <id>Q6ZW61</id>
        <label>BBS12</label>
    </interactant>
    <organismsDiffer>false</organismsDiffer>
    <experiments>5</experiments>
</comment>
<comment type="interaction">
    <interactant intactId="EBI-6128013">
        <id>Q8TAM1</id>
    </interactant>
    <interactant intactId="EBI-1806001">
        <id>Q8IWZ6</id>
        <label>BBS7</label>
    </interactant>
    <organismsDiffer>false</organismsDiffer>
    <experiments>5</experiments>
</comment>
<comment type="interaction">
    <interactant intactId="EBI-6128013">
        <id>Q8TAM1</id>
    </interactant>
    <interactant intactId="EBI-2826852">
        <id>Q3SYG4</id>
        <label>BBS9</label>
    </interactant>
    <organismsDiffer>false</organismsDiffer>
    <experiments>2</experiments>
</comment>
<comment type="subcellular location">
    <subcellularLocation>
        <location evidence="3">Cell projection</location>
        <location evidence="3">Cilium</location>
    </subcellularLocation>
    <text evidence="3">Located within the basal body of the primary cilium of differentiating preadipocytes.</text>
</comment>
<comment type="disease" evidence="1 2 4 5 6 7 8">
    <disease id="DI-00168">
        <name>Bardet-Biedl syndrome 10</name>
        <acronym>BBS10</acronym>
        <description>A syndrome characterized by usually severe pigmentary retinopathy, early-onset obesity, polydactyly, hypogenitalism, renal malformation and intellectual disability. Secondary features include diabetes mellitus, hypertension and congenital heart disease. Bardet-Biedl syndrome inheritance is autosomal recessive, but three mutated alleles (two at one locus, and a third at a second locus) may be required for clinical manifestation of some forms of the disease.</description>
        <dbReference type="MIM" id="615987"/>
    </disease>
    <text>The disease is caused by variants affecting the gene represented in this entry.</text>
</comment>
<comment type="miscellaneous">
    <text>Adipocytes derived from BBS-patients' dermal fibroblasts in culture exhibit higher propensity for fat accumulation when compared to controls. This strongly suggests that a peripheral primary dysfunction of adipogenesis participates in the pathogenesis of obesity in BBS.</text>
</comment>
<comment type="similarity">
    <text evidence="9">Belongs to the TCP-1 chaperonin family.</text>
</comment>
<comment type="sequence caution" evidence="9">
    <conflict type="erroneous initiation">
        <sequence resource="EMBL-CDS" id="AAH13795"/>
    </conflict>
    <text>Truncated N-terminus.</text>
</comment>
<comment type="sequence caution" evidence="9">
    <conflict type="erroneous initiation">
        <sequence resource="EMBL-CDS" id="BAB15695"/>
    </conflict>
    <text>Truncated N-terminus.</text>
</comment>
<feature type="chain" id="PRO_0000235272" description="BBSome complex assembly protein BBS10">
    <location>
        <begin position="1"/>
        <end position="723"/>
    </location>
</feature>
<feature type="sequence variant" id="VAR_075722" description="In BBS10; dbSNP:rs137852838." evidence="2">
    <original>V</original>
    <variation>G</variation>
    <location>
        <position position="11"/>
    </location>
</feature>
<feature type="sequence variant" id="VAR_026391" description="In BBS10; has moderately reduced ability to interact with BBS7 and BBS9; dbSNP:rs137852836." evidence="1 4">
    <original>R</original>
    <variation>P</variation>
    <location>
        <position position="34"/>
    </location>
</feature>
<feature type="sequence variant" id="VAR_026392" description="In BBS10; has moderately reduced ability to interact with BBS7 and BBS9; dbSNP:rs768933093." evidence="1 4 5 6">
    <original>R</original>
    <variation>W</variation>
    <location>
        <position position="49"/>
    </location>
</feature>
<feature type="sequence variant" id="VAR_066252" description="In BBS10; dbSNP:rs1460517643." evidence="6">
    <original>L</original>
    <variation>P</variation>
    <location>
        <position position="55"/>
    </location>
</feature>
<feature type="sequence variant" id="VAR_026393" description="In BBS10; has moderately reduced ability to interact with BBS7 and BBS9; dbSNP:rs148374859." evidence="1 4 6">
    <original>C</original>
    <variation>W</variation>
    <location>
        <position position="91"/>
    </location>
</feature>
<feature type="sequence variant" id="VAR_066253" description="In dbSNP:rs142863601." evidence="5">
    <original>D</original>
    <variation>N</variation>
    <location>
        <position position="142"/>
    </location>
</feature>
<feature type="sequence variant" id="VAR_026394" description="In BBS10; dbSNP:rs780916348." evidence="1">
    <original>L</original>
    <variation>S</variation>
    <location>
        <position position="170"/>
    </location>
</feature>
<feature type="sequence variant" id="VAR_066254" description="In BBS10; associated with V-636." evidence="6">
    <original>K</original>
    <variation>T</variation>
    <location>
        <position position="188"/>
    </location>
</feature>
<feature type="sequence variant" id="VAR_026395" description="In BBS10." evidence="1">
    <original>C</original>
    <variation>W</variation>
    <location>
        <position position="195"/>
    </location>
</feature>
<feature type="sequence variant" id="VAR_026396" description="In BBS10; dbSNP:rs756632517." evidence="1">
    <original>Y</original>
    <variation>C</variation>
    <location>
        <position position="197"/>
    </location>
</feature>
<feature type="sequence variant" id="VAR_026397" description="In BBS10; has moderately reduced ability to interact with BBS7 and BBS9; severely reduces the interaction with BBS12; 8% of wild-type." evidence="1 4">
    <original>V</original>
    <variation>G</variation>
    <location>
        <position position="240"/>
    </location>
</feature>
<feature type="sequence variant" id="VAR_066255" description="Found in a patient with Bardet-Biedl syndrome; uncertain significance; the patient is homozygous for a mutation in BBS2; dbSNP:rs139658279." evidence="5">
    <original>M</original>
    <variation>I</variation>
    <location>
        <position position="255"/>
    </location>
</feature>
<feature type="sequence variant" id="VAR_066256" description="Found in a patient with Bardet-Biedl syndrome; uncertain significance; the patient is compound heterozygote for mutations in BBS1; dbSNP:rs150587582." evidence="6">
    <original>A</original>
    <variation>T</variation>
    <location>
        <position position="296"/>
    </location>
</feature>
<feature type="sequence variant" id="VAR_026398" description="In BBS10; has moderately reduced ability to interact with BBS7 and BBS9." evidence="1 4">
    <original>L</original>
    <variation>F</variation>
    <location>
        <position position="308"/>
    </location>
</feature>
<feature type="sequence variant" id="VAR_026399" description="In BBS10; has moderately reduced ability to interact with BBS7 and BBS9; severely reduces the interaction with BBS12; 19% of wild-type; dbSNP:rs137852837." evidence="1 2 4">
    <original>S</original>
    <variation>A</variation>
    <location>
        <position position="311"/>
    </location>
</feature>
<feature type="sequence variant" id="VAR_026400" description="In BBS10; has moderately reduced ability to interact with BBS7 and BBS9; severely reduces the interaction with BBS12; 15% of wild-type; dbSNP:rs1000990130." evidence="1 4">
    <original>S</original>
    <variation>L</variation>
    <location>
        <position position="329"/>
    </location>
</feature>
<feature type="sequence variant" id="VAR_026401" description="In BBS10; has moderately reduced ability to interact with BBS7 and BBS9; dbSNP:rs938066133." evidence="1 4">
    <original>P</original>
    <variation>L</variation>
    <location>
        <position position="363"/>
    </location>
</feature>
<feature type="sequence variant" id="VAR_026402" description="In dbSNP:rs11109474.">
    <original>L</original>
    <variation>F</variation>
    <location>
        <position position="376"/>
    </location>
</feature>
<feature type="sequence variant" id="VAR_066257" description="In BBS10; dbSNP:rs1447555059." evidence="6">
    <original>H</original>
    <variation>Q</variation>
    <location>
        <position position="410"/>
    </location>
</feature>
<feature type="sequence variant" id="VAR_026403" description="In BBS10; dbSNP:rs786204575." evidence="1 6">
    <original>L</original>
    <variation>S</variation>
    <location>
        <position position="414"/>
    </location>
</feature>
<feature type="sequence variant" id="VAR_052272" description="In dbSNP:rs35676114." evidence="5">
    <original>P</original>
    <variation>L</variation>
    <location>
        <position position="539"/>
    </location>
</feature>
<feature type="sequence variant" id="VAR_079367" description="In BBS10; uncertain significance." evidence="8">
    <location>
        <begin position="559"/>
        <end position="723"/>
    </location>
</feature>
<feature type="sequence variant" id="VAR_026404" description="In BBS10; dbSNP:rs141521925." evidence="1">
    <original>K</original>
    <variation>R</variation>
    <location>
        <position position="579"/>
    </location>
</feature>
<feature type="sequence variant" id="VAR_066258" description="In BBS10." evidence="6">
    <original>L</original>
    <variation>S</variation>
    <location>
        <position position="600"/>
    </location>
</feature>
<feature type="sequence variant" id="VAR_026405" description="In BBS10; dbSNP:rs575957641." evidence="1">
    <original>Y</original>
    <variation>C</variation>
    <location>
        <position position="613"/>
    </location>
</feature>
<feature type="sequence variant" id="VAR_026406" description="In BBS10; has moderately reduced ability to interact with BBS7 and BBS9; dbSNP:rs141647931." evidence="1 4">
    <original>Y</original>
    <variation>H</variation>
    <location>
        <position position="613"/>
    </location>
</feature>
<feature type="sequence variant" id="VAR_066259" description="In BBS10; associated with T-188; dbSNP:rs113224628." evidence="6">
    <original>A</original>
    <variation>V</variation>
    <location>
        <position position="636"/>
    </location>
</feature>
<feature type="sequence variant" id="VAR_079368" description="In BBS10; uncertain significance." evidence="8">
    <location>
        <begin position="658"/>
        <end position="723"/>
    </location>
</feature>
<feature type="sequence variant" id="VAR_026407" description="In BBS10; has moderately reduced ability to interact with BBS7 and BBS9; dbSNP:rs1555202553." evidence="1 4">
    <original>G</original>
    <variation>V</variation>
    <location>
        <position position="677"/>
    </location>
</feature>
<feature type="sequence variant" id="VAR_066260" description="In BBS10." evidence="5">
    <original>L</original>
    <variation>P</variation>
    <location>
        <position position="687"/>
    </location>
</feature>
<feature type="sequence variant" id="VAR_026408" description="In BBS10; has moderately reduced ability to interact with BBS7 and BBS9; dbSNP:rs759387000." evidence="1 4">
    <original>T</original>
    <variation>P</variation>
    <location>
        <position position="689"/>
    </location>
</feature>
<feature type="sequence variant" id="VAR_066261" description="In dbSNP:rs769179905." evidence="6">
    <original>H</original>
    <variation>R</variation>
    <location>
        <position position="715"/>
    </location>
</feature>
<feature type="mutagenesis site" description="Greatly decreases all interactions with BBS7, BBS9 and BBS12 indicating that this residue may be required for overall protein conformation rather than required for ATP binding and substrate folding." evidence="4">
    <original>D</original>
    <variation>N</variation>
    <location>
        <position position="81"/>
    </location>
</feature>
<feature type="sequence conflict" description="In Ref. 2; BAB15695." evidence="9" ref="2">
    <original>T</original>
    <variation>S</variation>
    <location>
        <position position="514"/>
    </location>
</feature>
<feature type="sequence conflict" description="In Ref. 2; BAB15695." evidence="9" ref="2">
    <original>S</original>
    <variation>Y</variation>
    <location>
        <position position="586"/>
    </location>
</feature>
<feature type="sequence conflict" description="In Ref. 1; AAH26355." evidence="9" ref="1">
    <original>E</original>
    <variation>D</variation>
    <location>
        <position position="607"/>
    </location>
</feature>
<dbReference type="EMBL" id="BC013795">
    <property type="protein sequence ID" value="AAH13795.1"/>
    <property type="status" value="ALT_INIT"/>
    <property type="molecule type" value="mRNA"/>
</dbReference>
<dbReference type="EMBL" id="BC026355">
    <property type="protein sequence ID" value="AAH26355.2"/>
    <property type="molecule type" value="mRNA"/>
</dbReference>
<dbReference type="EMBL" id="AK027213">
    <property type="protein sequence ID" value="BAB15695.1"/>
    <property type="status" value="ALT_INIT"/>
    <property type="molecule type" value="mRNA"/>
</dbReference>
<dbReference type="CCDS" id="CCDS9014.2"/>
<dbReference type="RefSeq" id="NP_078961.3">
    <property type="nucleotide sequence ID" value="NM_024685.3"/>
</dbReference>
<dbReference type="BioGRID" id="122851">
    <property type="interactions" value="23"/>
</dbReference>
<dbReference type="CORUM" id="Q8TAM1"/>
<dbReference type="DIP" id="DIP-60347N"/>
<dbReference type="FunCoup" id="Q8TAM1">
    <property type="interactions" value="418"/>
</dbReference>
<dbReference type="IntAct" id="Q8TAM1">
    <property type="interactions" value="27"/>
</dbReference>
<dbReference type="MINT" id="Q8TAM1"/>
<dbReference type="STRING" id="9606.ENSP00000497413"/>
<dbReference type="iPTMnet" id="Q8TAM1"/>
<dbReference type="PhosphoSitePlus" id="Q8TAM1"/>
<dbReference type="BioMuta" id="BBS10"/>
<dbReference type="DMDM" id="97043964"/>
<dbReference type="jPOST" id="Q8TAM1"/>
<dbReference type="MassIVE" id="Q8TAM1"/>
<dbReference type="PaxDb" id="9606-ENSP00000376946"/>
<dbReference type="PeptideAtlas" id="Q8TAM1"/>
<dbReference type="ProteomicsDB" id="73892"/>
<dbReference type="Antibodypedia" id="29650">
    <property type="antibodies" value="163 antibodies from 26 providers"/>
</dbReference>
<dbReference type="DNASU" id="79738"/>
<dbReference type="Ensembl" id="ENST00000650064.2">
    <property type="protein sequence ID" value="ENSP00000497413.1"/>
    <property type="gene ID" value="ENSG00000179941.9"/>
</dbReference>
<dbReference type="GeneID" id="79738"/>
<dbReference type="KEGG" id="hsa:79738"/>
<dbReference type="MANE-Select" id="ENST00000650064.2">
    <property type="protein sequence ID" value="ENSP00000497413.1"/>
    <property type="RefSeq nucleotide sequence ID" value="NM_024685.4"/>
    <property type="RefSeq protein sequence ID" value="NP_078961.3"/>
</dbReference>
<dbReference type="UCSC" id="uc001syd.2">
    <property type="organism name" value="human"/>
</dbReference>
<dbReference type="AGR" id="HGNC:26291"/>
<dbReference type="CTD" id="79738"/>
<dbReference type="DisGeNET" id="79738"/>
<dbReference type="GeneCards" id="BBS10"/>
<dbReference type="GeneReviews" id="BBS10"/>
<dbReference type="HGNC" id="HGNC:26291">
    <property type="gene designation" value="BBS10"/>
</dbReference>
<dbReference type="HPA" id="ENSG00000179941">
    <property type="expression patterns" value="Low tissue specificity"/>
</dbReference>
<dbReference type="MalaCards" id="BBS10"/>
<dbReference type="MIM" id="610148">
    <property type="type" value="gene"/>
</dbReference>
<dbReference type="MIM" id="615987">
    <property type="type" value="phenotype"/>
</dbReference>
<dbReference type="neXtProt" id="NX_Q8TAM1"/>
<dbReference type="OpenTargets" id="ENSG00000179941"/>
<dbReference type="Orphanet" id="110">
    <property type="disease" value="Bardet-Biedl syndrome"/>
</dbReference>
<dbReference type="PharmGKB" id="PA143485387"/>
<dbReference type="VEuPathDB" id="HostDB:ENSG00000179941"/>
<dbReference type="eggNOG" id="KOG0357">
    <property type="taxonomic scope" value="Eukaryota"/>
</dbReference>
<dbReference type="eggNOG" id="KOG0360">
    <property type="taxonomic scope" value="Eukaryota"/>
</dbReference>
<dbReference type="GeneTree" id="ENSGT00390000002417"/>
<dbReference type="HOGENOM" id="CLU_028678_0_0_1"/>
<dbReference type="InParanoid" id="Q8TAM1"/>
<dbReference type="OMA" id="YFFKCMT"/>
<dbReference type="OrthoDB" id="9393833at2759"/>
<dbReference type="PAN-GO" id="Q8TAM1">
    <property type="GO annotations" value="1 GO annotation based on evolutionary models"/>
</dbReference>
<dbReference type="PhylomeDB" id="Q8TAM1"/>
<dbReference type="TreeFam" id="TF335867"/>
<dbReference type="PathwayCommons" id="Q8TAM1"/>
<dbReference type="Reactome" id="R-HSA-5620922">
    <property type="pathway name" value="BBSome-mediated cargo-targeting to cilium"/>
</dbReference>
<dbReference type="SignaLink" id="Q8TAM1"/>
<dbReference type="BioGRID-ORCS" id="79738">
    <property type="hits" value="10 hits in 1156 CRISPR screens"/>
</dbReference>
<dbReference type="ChiTaRS" id="BBS10">
    <property type="organism name" value="human"/>
</dbReference>
<dbReference type="GeneWiki" id="BBS10"/>
<dbReference type="GenomeRNAi" id="79738"/>
<dbReference type="Pharos" id="Q8TAM1">
    <property type="development level" value="Tbio"/>
</dbReference>
<dbReference type="PRO" id="PR:Q8TAM1"/>
<dbReference type="Proteomes" id="UP000005640">
    <property type="component" value="Chromosome 12"/>
</dbReference>
<dbReference type="RNAct" id="Q8TAM1">
    <property type="molecule type" value="protein"/>
</dbReference>
<dbReference type="Bgee" id="ENSG00000179941">
    <property type="expression patterns" value="Expressed in calcaneal tendon and 179 other cell types or tissues"/>
</dbReference>
<dbReference type="GO" id="GO:0005929">
    <property type="term" value="C:cilium"/>
    <property type="evidence" value="ECO:0007669"/>
    <property type="project" value="UniProtKB-SubCell"/>
</dbReference>
<dbReference type="GO" id="GO:0005524">
    <property type="term" value="F:ATP binding"/>
    <property type="evidence" value="ECO:0007669"/>
    <property type="project" value="UniProtKB-KW"/>
</dbReference>
<dbReference type="GO" id="GO:0061629">
    <property type="term" value="F:RNA polymerase II-specific DNA-binding transcription factor binding"/>
    <property type="evidence" value="ECO:0000353"/>
    <property type="project" value="MGI"/>
</dbReference>
<dbReference type="GO" id="GO:0051131">
    <property type="term" value="P:chaperone-mediated protein complex assembly"/>
    <property type="evidence" value="ECO:0000315"/>
    <property type="project" value="MGI"/>
</dbReference>
<dbReference type="GO" id="GO:1904390">
    <property type="term" value="P:cone retinal bipolar cell differentiation"/>
    <property type="evidence" value="ECO:0007669"/>
    <property type="project" value="Ensembl"/>
</dbReference>
<dbReference type="GO" id="GO:0043524">
    <property type="term" value="P:negative regulation of neuron apoptotic process"/>
    <property type="evidence" value="ECO:0007669"/>
    <property type="project" value="Ensembl"/>
</dbReference>
<dbReference type="GO" id="GO:0019228">
    <property type="term" value="P:neuronal action potential"/>
    <property type="evidence" value="ECO:0007669"/>
    <property type="project" value="Ensembl"/>
</dbReference>
<dbReference type="GO" id="GO:1905515">
    <property type="term" value="P:non-motile cilium assembly"/>
    <property type="evidence" value="ECO:0000315"/>
    <property type="project" value="BHF-UCL"/>
</dbReference>
<dbReference type="GO" id="GO:0045494">
    <property type="term" value="P:photoreceptor cell maintenance"/>
    <property type="evidence" value="ECO:0000315"/>
    <property type="project" value="BHF-UCL"/>
</dbReference>
<dbReference type="GO" id="GO:0008104">
    <property type="term" value="P:protein localization"/>
    <property type="evidence" value="ECO:0007669"/>
    <property type="project" value="Ensembl"/>
</dbReference>
<dbReference type="GO" id="GO:0043254">
    <property type="term" value="P:regulation of protein-containing complex assembly"/>
    <property type="evidence" value="ECO:0000315"/>
    <property type="project" value="MGI"/>
</dbReference>
<dbReference type="GO" id="GO:0034976">
    <property type="term" value="P:response to endoplasmic reticulum stress"/>
    <property type="evidence" value="ECO:0007669"/>
    <property type="project" value="Ensembl"/>
</dbReference>
<dbReference type="GO" id="GO:0009416">
    <property type="term" value="P:response to light stimulus"/>
    <property type="evidence" value="ECO:0007669"/>
    <property type="project" value="Ensembl"/>
</dbReference>
<dbReference type="GO" id="GO:0042670">
    <property type="term" value="P:retinal cone cell differentiation"/>
    <property type="evidence" value="ECO:0007669"/>
    <property type="project" value="Ensembl"/>
</dbReference>
<dbReference type="GO" id="GO:0060221">
    <property type="term" value="P:retinal rod cell differentiation"/>
    <property type="evidence" value="ECO:0007669"/>
    <property type="project" value="Ensembl"/>
</dbReference>
<dbReference type="GO" id="GO:0007601">
    <property type="term" value="P:visual perception"/>
    <property type="evidence" value="ECO:0007669"/>
    <property type="project" value="UniProtKB-KW"/>
</dbReference>
<dbReference type="FunFam" id="1.10.560.10:FF:000040">
    <property type="entry name" value="Bardet-Biedl syndrome 10 protein"/>
    <property type="match status" value="1"/>
</dbReference>
<dbReference type="FunFam" id="1.10.560.10:FF:000050">
    <property type="entry name" value="Bardet-Biedl syndrome 10 protein"/>
    <property type="match status" value="1"/>
</dbReference>
<dbReference type="FunFam" id="3.50.7.10:FF:000017">
    <property type="entry name" value="Bardet-Biedl syndrome 10 protein"/>
    <property type="match status" value="1"/>
</dbReference>
<dbReference type="Gene3D" id="3.50.7.10">
    <property type="entry name" value="GroEL"/>
    <property type="match status" value="1"/>
</dbReference>
<dbReference type="Gene3D" id="1.10.560.10">
    <property type="entry name" value="GroEL-like equatorial domain"/>
    <property type="match status" value="2"/>
</dbReference>
<dbReference type="Gene3D" id="3.30.260.10">
    <property type="entry name" value="TCP-1-like chaperonin intermediate domain"/>
    <property type="match status" value="1"/>
</dbReference>
<dbReference type="InterPro" id="IPR042619">
    <property type="entry name" value="BBS10"/>
</dbReference>
<dbReference type="InterPro" id="IPR002423">
    <property type="entry name" value="Cpn60/GroEL/TCP-1"/>
</dbReference>
<dbReference type="InterPro" id="IPR027409">
    <property type="entry name" value="GroEL-like_apical_dom_sf"/>
</dbReference>
<dbReference type="InterPro" id="IPR027413">
    <property type="entry name" value="GROEL-like_equatorial_sf"/>
</dbReference>
<dbReference type="InterPro" id="IPR027410">
    <property type="entry name" value="TCP-1-like_intermed_sf"/>
</dbReference>
<dbReference type="PANTHER" id="PTHR14667">
    <property type="entry name" value="BARDET-BIEDL SYNDROME 10 PROTEIN"/>
    <property type="match status" value="1"/>
</dbReference>
<dbReference type="PANTHER" id="PTHR14667:SF2">
    <property type="entry name" value="BARDET-BIEDL SYNDROME 10 PROTEIN"/>
    <property type="match status" value="1"/>
</dbReference>
<dbReference type="Pfam" id="PF00118">
    <property type="entry name" value="Cpn60_TCP1"/>
    <property type="match status" value="2"/>
</dbReference>
<dbReference type="SUPFAM" id="SSF48592">
    <property type="entry name" value="GroEL equatorial domain-like"/>
    <property type="match status" value="1"/>
</dbReference>
<keyword id="KW-0067">ATP-binding</keyword>
<keyword id="KW-0083">Bardet-Biedl syndrome</keyword>
<keyword id="KW-0966">Cell projection</keyword>
<keyword id="KW-0143">Chaperone</keyword>
<keyword id="KW-1186">Ciliopathy</keyword>
<keyword id="KW-0225">Disease variant</keyword>
<keyword id="KW-0991">Intellectual disability</keyword>
<keyword id="KW-0547">Nucleotide-binding</keyword>
<keyword id="KW-0550">Obesity</keyword>
<keyword id="KW-1267">Proteomics identification</keyword>
<keyword id="KW-1185">Reference proteome</keyword>
<keyword id="KW-0716">Sensory transduction</keyword>
<keyword id="KW-0844">Vision</keyword>
<evidence type="ECO:0000269" key="1">
    <source>
    </source>
</evidence>
<evidence type="ECO:0000269" key="2">
    <source>
    </source>
</evidence>
<evidence type="ECO:0000269" key="3">
    <source>
    </source>
</evidence>
<evidence type="ECO:0000269" key="4">
    <source>
    </source>
</evidence>
<evidence type="ECO:0000269" key="5">
    <source>
    </source>
</evidence>
<evidence type="ECO:0000269" key="6">
    <source>
    </source>
</evidence>
<evidence type="ECO:0000269" key="7">
    <source>
    </source>
</evidence>
<evidence type="ECO:0000269" key="8">
    <source>
    </source>
</evidence>
<evidence type="ECO:0000305" key="9"/>
<proteinExistence type="evidence at protein level"/>
<protein>
    <recommendedName>
        <fullName evidence="9">BBSome complex assembly protein BBS10</fullName>
    </recommendedName>
    <alternativeName>
        <fullName>Bardet-Biedl syndrome 10 protein</fullName>
    </alternativeName>
</protein>
<organism>
    <name type="scientific">Homo sapiens</name>
    <name type="common">Human</name>
    <dbReference type="NCBI Taxonomy" id="9606"/>
    <lineage>
        <taxon>Eukaryota</taxon>
        <taxon>Metazoa</taxon>
        <taxon>Chordata</taxon>
        <taxon>Craniata</taxon>
        <taxon>Vertebrata</taxon>
        <taxon>Euteleostomi</taxon>
        <taxon>Mammalia</taxon>
        <taxon>Eutheria</taxon>
        <taxon>Euarchontoglires</taxon>
        <taxon>Primates</taxon>
        <taxon>Haplorrhini</taxon>
        <taxon>Catarrhini</taxon>
        <taxon>Hominidae</taxon>
        <taxon>Homo</taxon>
    </lineage>
</organism>
<accession>Q8TAM1</accession>
<accession>Q96CW2</accession>
<accession>Q9H5D2</accession>
<reference key="1">
    <citation type="journal article" date="2004" name="Genome Res.">
        <title>The status, quality, and expansion of the NIH full-length cDNA project: the Mammalian Gene Collection (MGC).</title>
        <authorList>
            <consortium name="The MGC Project Team"/>
        </authorList>
    </citation>
    <scope>NUCLEOTIDE SEQUENCE [LARGE SCALE MRNA]</scope>
    <source>
        <tissue>Hippocampus</tissue>
        <tissue>Skin</tissue>
    </source>
</reference>
<reference key="2">
    <citation type="journal article" date="2004" name="Nat. Genet.">
        <title>Complete sequencing and characterization of 21,243 full-length human cDNAs.</title>
        <authorList>
            <person name="Ota T."/>
            <person name="Suzuki Y."/>
            <person name="Nishikawa T."/>
            <person name="Otsuki T."/>
            <person name="Sugiyama T."/>
            <person name="Irie R."/>
            <person name="Wakamatsu A."/>
            <person name="Hayashi K."/>
            <person name="Sato H."/>
            <person name="Nagai K."/>
            <person name="Kimura K."/>
            <person name="Makita H."/>
            <person name="Sekine M."/>
            <person name="Obayashi M."/>
            <person name="Nishi T."/>
            <person name="Shibahara T."/>
            <person name="Tanaka T."/>
            <person name="Ishii S."/>
            <person name="Yamamoto J."/>
            <person name="Saito K."/>
            <person name="Kawai Y."/>
            <person name="Isono Y."/>
            <person name="Nakamura Y."/>
            <person name="Nagahari K."/>
            <person name="Murakami K."/>
            <person name="Yasuda T."/>
            <person name="Iwayanagi T."/>
            <person name="Wagatsuma M."/>
            <person name="Shiratori A."/>
            <person name="Sudo H."/>
            <person name="Hosoiri T."/>
            <person name="Kaku Y."/>
            <person name="Kodaira H."/>
            <person name="Kondo H."/>
            <person name="Sugawara M."/>
            <person name="Takahashi M."/>
            <person name="Kanda K."/>
            <person name="Yokoi T."/>
            <person name="Furuya T."/>
            <person name="Kikkawa E."/>
            <person name="Omura Y."/>
            <person name="Abe K."/>
            <person name="Kamihara K."/>
            <person name="Katsuta N."/>
            <person name="Sato K."/>
            <person name="Tanikawa M."/>
            <person name="Yamazaki M."/>
            <person name="Ninomiya K."/>
            <person name="Ishibashi T."/>
            <person name="Yamashita H."/>
            <person name="Murakawa K."/>
            <person name="Fujimori K."/>
            <person name="Tanai H."/>
            <person name="Kimata M."/>
            <person name="Watanabe M."/>
            <person name="Hiraoka S."/>
            <person name="Chiba Y."/>
            <person name="Ishida S."/>
            <person name="Ono Y."/>
            <person name="Takiguchi S."/>
            <person name="Watanabe S."/>
            <person name="Yosida M."/>
            <person name="Hotuta T."/>
            <person name="Kusano J."/>
            <person name="Kanehori K."/>
            <person name="Takahashi-Fujii A."/>
            <person name="Hara H."/>
            <person name="Tanase T.-O."/>
            <person name="Nomura Y."/>
            <person name="Togiya S."/>
            <person name="Komai F."/>
            <person name="Hara R."/>
            <person name="Takeuchi K."/>
            <person name="Arita M."/>
            <person name="Imose N."/>
            <person name="Musashino K."/>
            <person name="Yuuki H."/>
            <person name="Oshima A."/>
            <person name="Sasaki N."/>
            <person name="Aotsuka S."/>
            <person name="Yoshikawa Y."/>
            <person name="Matsunawa H."/>
            <person name="Ichihara T."/>
            <person name="Shiohata N."/>
            <person name="Sano S."/>
            <person name="Moriya S."/>
            <person name="Momiyama H."/>
            <person name="Satoh N."/>
            <person name="Takami S."/>
            <person name="Terashima Y."/>
            <person name="Suzuki O."/>
            <person name="Nakagawa S."/>
            <person name="Senoh A."/>
            <person name="Mizoguchi H."/>
            <person name="Goto Y."/>
            <person name="Shimizu F."/>
            <person name="Wakebe H."/>
            <person name="Hishigaki H."/>
            <person name="Watanabe T."/>
            <person name="Sugiyama A."/>
            <person name="Takemoto M."/>
            <person name="Kawakami B."/>
            <person name="Yamazaki M."/>
            <person name="Watanabe K."/>
            <person name="Kumagai A."/>
            <person name="Itakura S."/>
            <person name="Fukuzumi Y."/>
            <person name="Fujimori Y."/>
            <person name="Komiyama M."/>
            <person name="Tashiro H."/>
            <person name="Tanigami A."/>
            <person name="Fujiwara T."/>
            <person name="Ono T."/>
            <person name="Yamada K."/>
            <person name="Fujii Y."/>
            <person name="Ozaki K."/>
            <person name="Hirao M."/>
            <person name="Ohmori Y."/>
            <person name="Kawabata A."/>
            <person name="Hikiji T."/>
            <person name="Kobatake N."/>
            <person name="Inagaki H."/>
            <person name="Ikema Y."/>
            <person name="Okamoto S."/>
            <person name="Okitani R."/>
            <person name="Kawakami T."/>
            <person name="Noguchi S."/>
            <person name="Itoh T."/>
            <person name="Shigeta K."/>
            <person name="Senba T."/>
            <person name="Matsumura K."/>
            <person name="Nakajima Y."/>
            <person name="Mizuno T."/>
            <person name="Morinaga M."/>
            <person name="Sasaki M."/>
            <person name="Togashi T."/>
            <person name="Oyama M."/>
            <person name="Hata H."/>
            <person name="Watanabe M."/>
            <person name="Komatsu T."/>
            <person name="Mizushima-Sugano J."/>
            <person name="Satoh T."/>
            <person name="Shirai Y."/>
            <person name="Takahashi Y."/>
            <person name="Nakagawa K."/>
            <person name="Okumura K."/>
            <person name="Nagase T."/>
            <person name="Nomura N."/>
            <person name="Kikuchi H."/>
            <person name="Masuho Y."/>
            <person name="Yamashita R."/>
            <person name="Nakai K."/>
            <person name="Yada T."/>
            <person name="Nakamura Y."/>
            <person name="Ohara O."/>
            <person name="Isogai T."/>
            <person name="Sugano S."/>
        </authorList>
    </citation>
    <scope>NUCLEOTIDE SEQUENCE [LARGE SCALE MRNA] OF 512-723</scope>
    <source>
        <tissue>Lung</tissue>
    </source>
</reference>
<reference key="3">
    <citation type="journal article" date="2006" name="Eur. J. Hum. Genet.">
        <title>Pitfalls of homozygosity mapping: an extended consanguineous Bardet-Biedl syndrome family with two mutant genes (BBS2, BBS10), three mutations, but no triallelism.</title>
        <authorList>
            <person name="Laurier V."/>
            <person name="Stoetzel C."/>
            <person name="Muller J."/>
            <person name="Thibault C."/>
            <person name="Corbani S."/>
            <person name="Jalkh N."/>
            <person name="Salem N."/>
            <person name="Chouery E."/>
            <person name="Poch O."/>
            <person name="Licaire S."/>
            <person name="Danse J.M."/>
            <person name="Amati-Bonneau P."/>
            <person name="Bonneau D."/>
            <person name="Megarbane A."/>
            <person name="Mandel J.L."/>
            <person name="Dollfus H."/>
        </authorList>
    </citation>
    <scope>INVOLVEMENT IN BBS10</scope>
    <scope>VARIANTS BBS10 GLY-11 AND ALA-311</scope>
</reference>
<reference key="4">
    <citation type="journal article" date="2009" name="Proc. Natl. Acad. Sci. U.S.A.">
        <title>Transient ciliogenesis involving Bardet-Biedl syndrome proteins is a fundamental characteristic of adipogenic differentiation.</title>
        <authorList>
            <person name="Marion V."/>
            <person name="Stoetzel C."/>
            <person name="Schlicht D."/>
            <person name="Messaddeq N."/>
            <person name="Koch M."/>
            <person name="Flori E."/>
            <person name="Danse J.M."/>
            <person name="Mandel J.-L."/>
            <person name="Dollfus H."/>
        </authorList>
    </citation>
    <scope>FUNCTION</scope>
    <scope>SUBCELLULAR LOCATION</scope>
</reference>
<reference key="5">
    <citation type="journal article" date="2010" name="Proc. Natl. Acad. Sci. U.S.A.">
        <title>BBS6, BBS10, and BBS12 form a complex with CCT/TRiC family chaperonins and mediate BBSome assembly.</title>
        <authorList>
            <person name="Seo S."/>
            <person name="Baye L.M."/>
            <person name="Schulz N.P."/>
            <person name="Beck J.S."/>
            <person name="Zhang Q."/>
            <person name="Slusarski D.C."/>
            <person name="Sheffield V.C."/>
        </authorList>
    </citation>
    <scope>FUNCTION</scope>
    <scope>IDENTIFICATION IN A MULTIPROTEIN COMPLEX</scope>
    <scope>CHARACTERIZATION OF VARIANTS BBS10 PRO-34; TRP-49; TRP-91; GLY-240; PHE-308; ALA-311; LEU-329; LEU-363; HIS-613; VAL-677 AND PRO-689</scope>
    <scope>MUTAGENESIS OF ASP-81</scope>
</reference>
<reference key="6">
    <citation type="journal article" date="2006" name="Nat. Genet.">
        <title>BBS10 encodes a vertebrate-specific chaperonin-like protein and is a major BBS locus.</title>
        <authorList>
            <person name="Stoetzel C."/>
            <person name="Laurier V."/>
            <person name="Davis E.E."/>
            <person name="Muller J."/>
            <person name="Rix S."/>
            <person name="Badano J.L."/>
            <person name="Leitch C.C."/>
            <person name="Salem N."/>
            <person name="Chouery E."/>
            <person name="Corbani S."/>
            <person name="Jalk N."/>
            <person name="Vicaire S."/>
            <person name="Sarda P."/>
            <person name="Hamel C."/>
            <person name="Lacombe D."/>
            <person name="Holder M."/>
            <person name="Odent S."/>
            <person name="Holder S."/>
            <person name="Brooks A.S."/>
            <person name="Elcioglu N.H."/>
            <person name="Da Silva E."/>
            <person name="Rossillion B."/>
            <person name="Sigaudy S."/>
            <person name="de Ravel T.J."/>
            <person name="Alan Lewis R."/>
            <person name="Leheup B."/>
            <person name="Verloes A."/>
            <person name="Amati-Bonneau P."/>
            <person name="Megarbane A."/>
            <person name="Poch O."/>
            <person name="Bonneau D."/>
            <person name="Beales P.L."/>
            <person name="Mandel J.-L."/>
            <person name="Katsanis N."/>
            <person name="Dollfus H."/>
        </authorList>
    </citation>
    <scope>VARIANTS BBS10 PRO-34; TRP-49; TRP-91; SER-170; TRP-195; CYS-197; GLY-240; PHE-308; ALA-311; LEU-329; LEU-363; SER-414; ARG-579; HIS-613; CYS-613; VAL-677 AND PRO-689</scope>
</reference>
<reference key="7">
    <citation type="journal article" date="2010" name="Hum. Mutat.">
        <title>Bardet-Biedl syndrome in Denmark -- report of 13 novel sequence variations in six genes.</title>
        <authorList>
            <person name="Hjortshoj T.D."/>
            <person name="Gronskov K."/>
            <person name="Philp A.R."/>
            <person name="Nishimura D.Y."/>
            <person name="Riise R."/>
            <person name="Sheffield V.C."/>
            <person name="Rosenberg T."/>
            <person name="Brondum-Nielsen K."/>
        </authorList>
    </citation>
    <scope>VARIANTS BBS10 TRP-49 AND PRO-687</scope>
    <scope>VARIANTS ASN-142; ILE-255 AND LEU-539</scope>
</reference>
<reference key="8">
    <citation type="journal article" date="2011" name="Hum. Mutat.">
        <title>BBS genotype-phenotype assessment of a multiethnic patient cohort calls for a revision of the disease definition.</title>
        <authorList>
            <person name="Deveault C."/>
            <person name="Billingsley G."/>
            <person name="Duncan J.L."/>
            <person name="Bin J."/>
            <person name="Theal R."/>
            <person name="Vincent A."/>
            <person name="Fieggen K.J."/>
            <person name="Gerth C."/>
            <person name="Noordeh N."/>
            <person name="Traboulsi E.I."/>
            <person name="Fishman G.A."/>
            <person name="Chitayat D."/>
            <person name="Knueppel T."/>
            <person name="Millan J.M."/>
            <person name="Munier F.L."/>
            <person name="Kennedy D."/>
            <person name="Jacobson S.G."/>
            <person name="Innes A.M."/>
            <person name="Mitchell G.A."/>
            <person name="Boycott K."/>
            <person name="Heon E."/>
        </authorList>
    </citation>
    <scope>VARIANTS BBS10 TRP-49; PRO-55; TRP-91; THR-188; GLN-410; SER-414; SER-600 AND VAL-636</scope>
    <scope>VARIANTS THR-296 AND ARG-715</scope>
</reference>
<reference key="9">
    <citation type="journal article" date="2013" name="Gene">
        <title>Novel homozygous mutations in the genes ARL6 and BBS10 underlying Bardet-Biedl syndrome.</title>
        <authorList>
            <person name="Khan S."/>
            <person name="Ullah I."/>
            <person name="Irfanullah X."/>
            <person name="Touseef M."/>
            <person name="Basit S."/>
            <person name="Khan M.N."/>
            <person name="Ahmad W."/>
        </authorList>
    </citation>
    <scope>INVOLVEMENT IN BBS10</scope>
</reference>
<reference key="10">
    <citation type="journal article" date="2017" name="Hum. Genome Var.">
        <title>A novel BBS10 mutation identified in a patient with Bardet-Biedl syndrome with a violent emotional outbreak.</title>
        <authorList>
            <person name="Ohto T."/>
            <person name="Enokizono T."/>
            <person name="Tanaka R."/>
            <person name="Tanaka M."/>
            <person name="Suzuki H."/>
            <person name="Sakai A."/>
            <person name="Imagawa K."/>
            <person name="Fukushima H."/>
            <person name="Fukushima T."/>
            <person name="Sumazaki R."/>
            <person name="Uehara T."/>
            <person name="Takenouchi T."/>
            <person name="Kosaki K."/>
        </authorList>
    </citation>
    <scope>VARIANTS BBS10 559-TYR--LEU-723 DEL AND 658-TYR--LEU-723 DEL</scope>
</reference>